<reference key="1">
    <citation type="journal article" date="2003" name="Proc. Natl. Acad. Sci. U.S.A.">
        <title>The complete genome sequence of the carcinogenic bacterium Helicobacter hepaticus.</title>
        <authorList>
            <person name="Suerbaum S."/>
            <person name="Josenhans C."/>
            <person name="Sterzenbach T."/>
            <person name="Drescher B."/>
            <person name="Brandt P."/>
            <person name="Bell M."/>
            <person name="Droege M."/>
            <person name="Fartmann B."/>
            <person name="Fischer H.-P."/>
            <person name="Ge Z."/>
            <person name="Hoerster A."/>
            <person name="Holland R."/>
            <person name="Klein K."/>
            <person name="Koenig J."/>
            <person name="Macko L."/>
            <person name="Mendz G.L."/>
            <person name="Nyakatura G."/>
            <person name="Schauer D.B."/>
            <person name="Shen Z."/>
            <person name="Weber J."/>
            <person name="Frosch M."/>
            <person name="Fox J.G."/>
        </authorList>
    </citation>
    <scope>NUCLEOTIDE SEQUENCE [LARGE SCALE GENOMIC DNA]</scope>
    <source>
        <strain>ATCC 51449 / 3B1</strain>
    </source>
</reference>
<evidence type="ECO:0000255" key="1">
    <source>
        <dbReference type="HAMAP-Rule" id="MF_00181"/>
    </source>
</evidence>
<keyword id="KW-0031">Aminopeptidase</keyword>
<keyword id="KW-0963">Cytoplasm</keyword>
<keyword id="KW-0378">Hydrolase</keyword>
<keyword id="KW-0464">Manganese</keyword>
<keyword id="KW-0479">Metal-binding</keyword>
<keyword id="KW-0645">Protease</keyword>
<keyword id="KW-1185">Reference proteome</keyword>
<protein>
    <recommendedName>
        <fullName evidence="1">Probable cytosol aminopeptidase</fullName>
        <ecNumber evidence="1">3.4.11.1</ecNumber>
    </recommendedName>
    <alternativeName>
        <fullName evidence="1">Leucine aminopeptidase</fullName>
        <shortName evidence="1">LAP</shortName>
        <ecNumber evidence="1">3.4.11.10</ecNumber>
    </alternativeName>
    <alternativeName>
        <fullName evidence="1">Leucyl aminopeptidase</fullName>
    </alternativeName>
</protein>
<comment type="function">
    <text evidence="1">Presumably involved in the processing and regular turnover of intracellular proteins. Catalyzes the removal of unsubstituted N-terminal amino acids from various peptides.</text>
</comment>
<comment type="catalytic activity">
    <reaction evidence="1">
        <text>Release of an N-terminal amino acid, Xaa-|-Yaa-, in which Xaa is preferably Leu, but may be other amino acids including Pro although not Arg or Lys, and Yaa may be Pro. Amino acid amides and methyl esters are also readily hydrolyzed, but rates on arylamides are exceedingly low.</text>
        <dbReference type="EC" id="3.4.11.1"/>
    </reaction>
</comment>
<comment type="catalytic activity">
    <reaction evidence="1">
        <text>Release of an N-terminal amino acid, preferentially leucine, but not glutamic or aspartic acids.</text>
        <dbReference type="EC" id="3.4.11.10"/>
    </reaction>
</comment>
<comment type="cofactor">
    <cofactor evidence="1">
        <name>Mn(2+)</name>
        <dbReference type="ChEBI" id="CHEBI:29035"/>
    </cofactor>
    <text evidence="1">Binds 2 manganese ions per subunit.</text>
</comment>
<comment type="subcellular location">
    <subcellularLocation>
        <location evidence="1">Cytoplasm</location>
    </subcellularLocation>
</comment>
<comment type="similarity">
    <text evidence="1">Belongs to the peptidase M17 family.</text>
</comment>
<organism>
    <name type="scientific">Helicobacter hepaticus (strain ATCC 51449 / 3B1)</name>
    <dbReference type="NCBI Taxonomy" id="235279"/>
    <lineage>
        <taxon>Bacteria</taxon>
        <taxon>Pseudomonadati</taxon>
        <taxon>Campylobacterota</taxon>
        <taxon>Epsilonproteobacteria</taxon>
        <taxon>Campylobacterales</taxon>
        <taxon>Helicobacteraceae</taxon>
        <taxon>Helicobacter</taxon>
    </lineage>
</organism>
<sequence>MKVSISHKNNFKGVSYQAQALLMSKSVFAKSPYAKLCKSFGFEGEGKFFLQEQALLLVCVEELGLDSIREAGASIARHFRTLPYKNVNVALNGKLDDSKAYALLLGALLGVYECVSYKTKTPPLHLKEIILLDEKNEVASESVLKKVHIVAQSVNEVREIINTIPQVATPKYLAKYAKELSKEVGNLECKILDEEALQKEKMGAFLAVNRASCNPPRLIHLSYKPKGAKKRIVLVGKGLTYDCGGLSLKPADFMVTMKADKSGGCAVMGIIKAIAQLGANIEVHSIIGAAENMIGGNAYKPDDVLYSREGKSIEVRNTDAEGRLVLVDCLSYAQDLKPDILIDFATLTGACVVALGEFTSGIMGHNDRLKAQFEKCALESGELMATLPFNRHLKKLIESKIADVCNVGSSRYGGAISAGLFLSEFIREEFKQKWLHIDIAGPAYVEKEWDINPSGASGAGVRAGIEFILAQGKA</sequence>
<feature type="chain" id="PRO_0000165759" description="Probable cytosol aminopeptidase">
    <location>
        <begin position="1"/>
        <end position="474"/>
    </location>
</feature>
<feature type="active site" evidence="1">
    <location>
        <position position="249"/>
    </location>
</feature>
<feature type="active site" evidence="1">
    <location>
        <position position="323"/>
    </location>
</feature>
<feature type="binding site" evidence="1">
    <location>
        <position position="237"/>
    </location>
    <ligand>
        <name>Mn(2+)</name>
        <dbReference type="ChEBI" id="CHEBI:29035"/>
        <label>2</label>
    </ligand>
</feature>
<feature type="binding site" evidence="1">
    <location>
        <position position="242"/>
    </location>
    <ligand>
        <name>Mn(2+)</name>
        <dbReference type="ChEBI" id="CHEBI:29035"/>
        <label>1</label>
    </ligand>
</feature>
<feature type="binding site" evidence="1">
    <location>
        <position position="242"/>
    </location>
    <ligand>
        <name>Mn(2+)</name>
        <dbReference type="ChEBI" id="CHEBI:29035"/>
        <label>2</label>
    </ligand>
</feature>
<feature type="binding site" evidence="1">
    <location>
        <position position="260"/>
    </location>
    <ligand>
        <name>Mn(2+)</name>
        <dbReference type="ChEBI" id="CHEBI:29035"/>
        <label>2</label>
    </ligand>
</feature>
<feature type="binding site" evidence="1">
    <location>
        <position position="319"/>
    </location>
    <ligand>
        <name>Mn(2+)</name>
        <dbReference type="ChEBI" id="CHEBI:29035"/>
        <label>1</label>
    </ligand>
</feature>
<feature type="binding site" evidence="1">
    <location>
        <position position="321"/>
    </location>
    <ligand>
        <name>Mn(2+)</name>
        <dbReference type="ChEBI" id="CHEBI:29035"/>
        <label>1</label>
    </ligand>
</feature>
<feature type="binding site" evidence="1">
    <location>
        <position position="321"/>
    </location>
    <ligand>
        <name>Mn(2+)</name>
        <dbReference type="ChEBI" id="CHEBI:29035"/>
        <label>2</label>
    </ligand>
</feature>
<accession>Q7VGF0</accession>
<proteinExistence type="inferred from homology"/>
<name>AMPA_HELHP</name>
<gene>
    <name evidence="1" type="primary">pepA</name>
    <name type="ordered locus">HH_1372</name>
</gene>
<dbReference type="EC" id="3.4.11.1" evidence="1"/>
<dbReference type="EC" id="3.4.11.10" evidence="1"/>
<dbReference type="EMBL" id="AE017125">
    <property type="protein sequence ID" value="AAP77969.1"/>
    <property type="molecule type" value="Genomic_DNA"/>
</dbReference>
<dbReference type="RefSeq" id="WP_011116212.1">
    <property type="nucleotide sequence ID" value="NC_004917.1"/>
</dbReference>
<dbReference type="SMR" id="Q7VGF0"/>
<dbReference type="STRING" id="235279.HH_1372"/>
<dbReference type="MEROPS" id="M17.016"/>
<dbReference type="KEGG" id="hhe:HH_1372"/>
<dbReference type="eggNOG" id="COG0260">
    <property type="taxonomic scope" value="Bacteria"/>
</dbReference>
<dbReference type="HOGENOM" id="CLU_013734_6_3_7"/>
<dbReference type="OrthoDB" id="9809354at2"/>
<dbReference type="Proteomes" id="UP000002495">
    <property type="component" value="Chromosome"/>
</dbReference>
<dbReference type="GO" id="GO:0005737">
    <property type="term" value="C:cytoplasm"/>
    <property type="evidence" value="ECO:0007669"/>
    <property type="project" value="UniProtKB-SubCell"/>
</dbReference>
<dbReference type="GO" id="GO:0030145">
    <property type="term" value="F:manganese ion binding"/>
    <property type="evidence" value="ECO:0007669"/>
    <property type="project" value="UniProtKB-UniRule"/>
</dbReference>
<dbReference type="GO" id="GO:0070006">
    <property type="term" value="F:metalloaminopeptidase activity"/>
    <property type="evidence" value="ECO:0007669"/>
    <property type="project" value="InterPro"/>
</dbReference>
<dbReference type="GO" id="GO:0006508">
    <property type="term" value="P:proteolysis"/>
    <property type="evidence" value="ECO:0007669"/>
    <property type="project" value="UniProtKB-KW"/>
</dbReference>
<dbReference type="CDD" id="cd00433">
    <property type="entry name" value="Peptidase_M17"/>
    <property type="match status" value="1"/>
</dbReference>
<dbReference type="Gene3D" id="3.40.220.10">
    <property type="entry name" value="Leucine Aminopeptidase, subunit E, domain 1"/>
    <property type="match status" value="1"/>
</dbReference>
<dbReference type="Gene3D" id="3.40.630.10">
    <property type="entry name" value="Zn peptidases"/>
    <property type="match status" value="1"/>
</dbReference>
<dbReference type="HAMAP" id="MF_00181">
    <property type="entry name" value="Cytosol_peptidase_M17"/>
    <property type="match status" value="1"/>
</dbReference>
<dbReference type="InterPro" id="IPR011356">
    <property type="entry name" value="Leucine_aapep/pepB"/>
</dbReference>
<dbReference type="InterPro" id="IPR043472">
    <property type="entry name" value="Macro_dom-like"/>
</dbReference>
<dbReference type="InterPro" id="IPR000819">
    <property type="entry name" value="Peptidase_M17_C"/>
</dbReference>
<dbReference type="InterPro" id="IPR023042">
    <property type="entry name" value="Peptidase_M17_leu_NH2_pept"/>
</dbReference>
<dbReference type="InterPro" id="IPR008283">
    <property type="entry name" value="Peptidase_M17_N"/>
</dbReference>
<dbReference type="NCBIfam" id="NF002081">
    <property type="entry name" value="PRK00913.3-3"/>
    <property type="match status" value="1"/>
</dbReference>
<dbReference type="PANTHER" id="PTHR11963:SF23">
    <property type="entry name" value="CYTOSOL AMINOPEPTIDASE"/>
    <property type="match status" value="1"/>
</dbReference>
<dbReference type="PANTHER" id="PTHR11963">
    <property type="entry name" value="LEUCINE AMINOPEPTIDASE-RELATED"/>
    <property type="match status" value="1"/>
</dbReference>
<dbReference type="Pfam" id="PF00883">
    <property type="entry name" value="Peptidase_M17"/>
    <property type="match status" value="1"/>
</dbReference>
<dbReference type="Pfam" id="PF02789">
    <property type="entry name" value="Peptidase_M17_N"/>
    <property type="match status" value="1"/>
</dbReference>
<dbReference type="PRINTS" id="PR00481">
    <property type="entry name" value="LAMNOPPTDASE"/>
</dbReference>
<dbReference type="SUPFAM" id="SSF52949">
    <property type="entry name" value="Macro domain-like"/>
    <property type="match status" value="1"/>
</dbReference>
<dbReference type="SUPFAM" id="SSF53187">
    <property type="entry name" value="Zn-dependent exopeptidases"/>
    <property type="match status" value="1"/>
</dbReference>
<dbReference type="PROSITE" id="PS00631">
    <property type="entry name" value="CYTOSOL_AP"/>
    <property type="match status" value="1"/>
</dbReference>